<comment type="subcellular location">
    <subcellularLocation>
        <location>Cell outer membrane</location>
        <topology>Lipid-anchor</topology>
    </subcellularLocation>
</comment>
<dbReference type="EMBL" id="X70826">
    <property type="protein sequence ID" value="CAA50156.1"/>
    <property type="molecule type" value="Genomic_DNA"/>
</dbReference>
<dbReference type="EMBL" id="CP001205">
    <property type="protein sequence ID" value="ACK74785.1"/>
    <property type="molecule type" value="Genomic_DNA"/>
</dbReference>
<dbReference type="PIR" id="D70145">
    <property type="entry name" value="D70145"/>
</dbReference>
<dbReference type="RefSeq" id="WP_002657819.1">
    <property type="nucleotide sequence ID" value="NC_011728.1"/>
</dbReference>
<dbReference type="SMR" id="B7J1T8"/>
<dbReference type="GeneID" id="56567793"/>
<dbReference type="KEGG" id="bbz:BbuZS7_0367"/>
<dbReference type="HOGENOM" id="CLU_1400113_0_0_12"/>
<dbReference type="Proteomes" id="UP000006901">
    <property type="component" value="Chromosome"/>
</dbReference>
<dbReference type="GO" id="GO:0009279">
    <property type="term" value="C:cell outer membrane"/>
    <property type="evidence" value="ECO:0007669"/>
    <property type="project" value="UniProtKB-SubCell"/>
</dbReference>
<dbReference type="PROSITE" id="PS51257">
    <property type="entry name" value="PROKAR_LIPOPROTEIN"/>
    <property type="match status" value="1"/>
</dbReference>
<gene>
    <name type="primary">p22</name>
    <name type="ordered locus">BbuZS7_0367</name>
</gene>
<sequence>MYKNGFFKNYLSLFLIFLVIACTSKDSSNEYVEEQEAENSSKPDDSKIDEHTIGHVFHAMGVVHSKKDRKSLGKNIKVFYFSEEDGHFQTIPSKENAKLIVYFYDNVYAGEAPISISGKEAFIFVGITPDFKKIINSNLHGAKSDLIGTFKDLNIKNSKLEITVDENNSDAKTFLESVNYIIDGVEKISPMLTN</sequence>
<keyword id="KW-0998">Cell outer membrane</keyword>
<keyword id="KW-0449">Lipoprotein</keyword>
<keyword id="KW-0472">Membrane</keyword>
<keyword id="KW-0564">Palmitate</keyword>
<keyword id="KW-0732">Signal</keyword>
<evidence type="ECO:0000305" key="1"/>
<reference key="1">
    <citation type="journal article" date="1993" name="Infect. Immun.">
        <title>Molecular and immunological characterization of a novel polymorphic lipoprotein of Borrelia burgdorferi.</title>
        <authorList>
            <person name="Wallich R."/>
            <person name="Simon M.M."/>
            <person name="Hofmann H."/>
            <person name="Moter S.E."/>
            <person name="Schaible U.E."/>
            <person name="Kramer M.D."/>
        </authorList>
    </citation>
    <scope>NUCLEOTIDE SEQUENCE [GENOMIC DNA]</scope>
</reference>
<reference key="2">
    <citation type="journal article" date="2011" name="J. Bacteriol.">
        <title>Whole-genome sequences of thirteen isolates of Borrelia burgdorferi.</title>
        <authorList>
            <person name="Schutzer S.E."/>
            <person name="Fraser-Liggett C.M."/>
            <person name="Casjens S.R."/>
            <person name="Qiu W.G."/>
            <person name="Dunn J.J."/>
            <person name="Mongodin E.F."/>
            <person name="Luft B.J."/>
        </authorList>
    </citation>
    <scope>NUCLEOTIDE SEQUENCE [LARGE SCALE GENOMIC DNA]</scope>
    <source>
        <strain>ZS7</strain>
    </source>
</reference>
<organism>
    <name type="scientific">Borreliella burgdorferi (strain ZS7)</name>
    <name type="common">Borrelia burgdorferi</name>
    <dbReference type="NCBI Taxonomy" id="445985"/>
    <lineage>
        <taxon>Bacteria</taxon>
        <taxon>Pseudomonadati</taxon>
        <taxon>Spirochaetota</taxon>
        <taxon>Spirochaetia</taxon>
        <taxon>Spirochaetales</taxon>
        <taxon>Borreliaceae</taxon>
        <taxon>Borreliella</taxon>
    </lineage>
</organism>
<feature type="signal peptide" evidence="1">
    <location>
        <begin position="1"/>
        <end position="21"/>
    </location>
</feature>
<feature type="chain" id="PRO_0000370270" description="Outer surface 22 kDa lipoprotein">
    <location>
        <begin position="22"/>
        <end position="194"/>
    </location>
</feature>
<feature type="lipid moiety-binding region" description="N-palmitoyl cysteine" evidence="1">
    <location>
        <position position="22"/>
    </location>
</feature>
<feature type="lipid moiety-binding region" description="S-diacylglycerol cysteine" evidence="1">
    <location>
        <position position="22"/>
    </location>
</feature>
<proteinExistence type="predicted"/>
<name>P22_BORBZ</name>
<protein>
    <recommendedName>
        <fullName>Outer surface 22 kDa lipoprotein</fullName>
    </recommendedName>
    <alternativeName>
        <fullName>Antigen IPLA7</fullName>
    </alternativeName>
</protein>
<accession>B7J1T8</accession>
<accession>Q05903</accession>
<accession>Q45008</accession>